<sequence>MCSSAAASPALDDIEEGIALRPKFDAAGLVTCVTTDAGSGDVLMVAHMNAEALEKTIQSGEAWYYSRSRKRLWKKGESSGHVQRVLEMRIDCDQDAVWIRVDQAGGAACHTGRKSCFYRRIDRDASGEPLLTMVDAERQFDPDKVYGK</sequence>
<organism>
    <name type="scientific">Rhodopseudomonas palustris (strain HaA2)</name>
    <dbReference type="NCBI Taxonomy" id="316058"/>
    <lineage>
        <taxon>Bacteria</taxon>
        <taxon>Pseudomonadati</taxon>
        <taxon>Pseudomonadota</taxon>
        <taxon>Alphaproteobacteria</taxon>
        <taxon>Hyphomicrobiales</taxon>
        <taxon>Nitrobacteraceae</taxon>
        <taxon>Rhodopseudomonas</taxon>
    </lineage>
</organism>
<keyword id="KW-0028">Amino-acid biosynthesis</keyword>
<keyword id="KW-0963">Cytoplasm</keyword>
<keyword id="KW-0368">Histidine biosynthesis</keyword>
<keyword id="KW-0378">Hydrolase</keyword>
<keyword id="KW-0460">Magnesium</keyword>
<keyword id="KW-0479">Metal-binding</keyword>
<keyword id="KW-1185">Reference proteome</keyword>
<keyword id="KW-0862">Zinc</keyword>
<dbReference type="EC" id="3.5.4.19" evidence="1"/>
<dbReference type="EMBL" id="CP000250">
    <property type="protein sequence ID" value="ABD06891.1"/>
    <property type="molecule type" value="Genomic_DNA"/>
</dbReference>
<dbReference type="RefSeq" id="WP_011441078.1">
    <property type="nucleotide sequence ID" value="NC_007778.1"/>
</dbReference>
<dbReference type="SMR" id="Q2IY19"/>
<dbReference type="STRING" id="316058.RPB_2185"/>
<dbReference type="KEGG" id="rpb:RPB_2185"/>
<dbReference type="eggNOG" id="COG0139">
    <property type="taxonomic scope" value="Bacteria"/>
</dbReference>
<dbReference type="HOGENOM" id="CLU_048577_5_0_5"/>
<dbReference type="OrthoDB" id="9795769at2"/>
<dbReference type="UniPathway" id="UPA00031">
    <property type="reaction ID" value="UER00008"/>
</dbReference>
<dbReference type="Proteomes" id="UP000008809">
    <property type="component" value="Chromosome"/>
</dbReference>
<dbReference type="GO" id="GO:0005737">
    <property type="term" value="C:cytoplasm"/>
    <property type="evidence" value="ECO:0007669"/>
    <property type="project" value="UniProtKB-SubCell"/>
</dbReference>
<dbReference type="GO" id="GO:0000287">
    <property type="term" value="F:magnesium ion binding"/>
    <property type="evidence" value="ECO:0007669"/>
    <property type="project" value="UniProtKB-UniRule"/>
</dbReference>
<dbReference type="GO" id="GO:0004635">
    <property type="term" value="F:phosphoribosyl-AMP cyclohydrolase activity"/>
    <property type="evidence" value="ECO:0007669"/>
    <property type="project" value="UniProtKB-UniRule"/>
</dbReference>
<dbReference type="GO" id="GO:0008270">
    <property type="term" value="F:zinc ion binding"/>
    <property type="evidence" value="ECO:0007669"/>
    <property type="project" value="UniProtKB-UniRule"/>
</dbReference>
<dbReference type="GO" id="GO:0000105">
    <property type="term" value="P:L-histidine biosynthetic process"/>
    <property type="evidence" value="ECO:0007669"/>
    <property type="project" value="UniProtKB-UniRule"/>
</dbReference>
<dbReference type="FunFam" id="3.10.20.810:FF:000001">
    <property type="entry name" value="Histidine biosynthesis bifunctional protein HisIE"/>
    <property type="match status" value="1"/>
</dbReference>
<dbReference type="Gene3D" id="3.10.20.810">
    <property type="entry name" value="Phosphoribosyl-AMP cyclohydrolase"/>
    <property type="match status" value="1"/>
</dbReference>
<dbReference type="HAMAP" id="MF_01021">
    <property type="entry name" value="HisI"/>
    <property type="match status" value="1"/>
</dbReference>
<dbReference type="InterPro" id="IPR026660">
    <property type="entry name" value="PRA-CH"/>
</dbReference>
<dbReference type="InterPro" id="IPR002496">
    <property type="entry name" value="PRib_AMP_CycHydrolase_dom"/>
</dbReference>
<dbReference type="InterPro" id="IPR038019">
    <property type="entry name" value="PRib_AMP_CycHydrolase_sf"/>
</dbReference>
<dbReference type="NCBIfam" id="NF000768">
    <property type="entry name" value="PRK00051.1"/>
    <property type="match status" value="1"/>
</dbReference>
<dbReference type="PANTHER" id="PTHR42945">
    <property type="entry name" value="HISTIDINE BIOSYNTHESIS BIFUNCTIONAL PROTEIN"/>
    <property type="match status" value="1"/>
</dbReference>
<dbReference type="PANTHER" id="PTHR42945:SF1">
    <property type="entry name" value="HISTIDINE BIOSYNTHESIS BIFUNCTIONAL PROTEIN HIS7"/>
    <property type="match status" value="1"/>
</dbReference>
<dbReference type="Pfam" id="PF01502">
    <property type="entry name" value="PRA-CH"/>
    <property type="match status" value="1"/>
</dbReference>
<dbReference type="SUPFAM" id="SSF141734">
    <property type="entry name" value="HisI-like"/>
    <property type="match status" value="1"/>
</dbReference>
<accession>Q2IY19</accession>
<reference key="1">
    <citation type="submission" date="2006-01" db="EMBL/GenBank/DDBJ databases">
        <title>Complete sequence of Rhodopseudomonas palustris HaA2.</title>
        <authorList>
            <consortium name="US DOE Joint Genome Institute"/>
            <person name="Copeland A."/>
            <person name="Lucas S."/>
            <person name="Lapidus A."/>
            <person name="Barry K."/>
            <person name="Detter J.C."/>
            <person name="Glavina T."/>
            <person name="Hammon N."/>
            <person name="Israni S."/>
            <person name="Pitluck S."/>
            <person name="Chain P."/>
            <person name="Malfatti S."/>
            <person name="Shin M."/>
            <person name="Vergez L."/>
            <person name="Schmutz J."/>
            <person name="Larimer F."/>
            <person name="Land M."/>
            <person name="Hauser L."/>
            <person name="Pelletier D.A."/>
            <person name="Kyrpides N."/>
            <person name="Anderson I."/>
            <person name="Oda Y."/>
            <person name="Harwood C.S."/>
            <person name="Richardson P."/>
        </authorList>
    </citation>
    <scope>NUCLEOTIDE SEQUENCE [LARGE SCALE GENOMIC DNA]</scope>
    <source>
        <strain>HaA2</strain>
    </source>
</reference>
<name>HIS3_RHOP2</name>
<gene>
    <name evidence="1" type="primary">hisI</name>
    <name type="ordered locus">RPB_2185</name>
</gene>
<comment type="function">
    <text evidence="1">Catalyzes the hydrolysis of the adenine ring of phosphoribosyl-AMP.</text>
</comment>
<comment type="catalytic activity">
    <reaction evidence="1">
        <text>1-(5-phospho-beta-D-ribosyl)-5'-AMP + H2O = 1-(5-phospho-beta-D-ribosyl)-5-[(5-phospho-beta-D-ribosylamino)methylideneamino]imidazole-4-carboxamide</text>
        <dbReference type="Rhea" id="RHEA:20049"/>
        <dbReference type="ChEBI" id="CHEBI:15377"/>
        <dbReference type="ChEBI" id="CHEBI:58435"/>
        <dbReference type="ChEBI" id="CHEBI:59457"/>
        <dbReference type="EC" id="3.5.4.19"/>
    </reaction>
</comment>
<comment type="cofactor">
    <cofactor evidence="1">
        <name>Mg(2+)</name>
        <dbReference type="ChEBI" id="CHEBI:18420"/>
    </cofactor>
    <text evidence="1">Binds 1 Mg(2+) ion per subunit.</text>
</comment>
<comment type="cofactor">
    <cofactor evidence="1">
        <name>Zn(2+)</name>
        <dbReference type="ChEBI" id="CHEBI:29105"/>
    </cofactor>
    <text evidence="1">Binds 1 zinc ion per subunit.</text>
</comment>
<comment type="pathway">
    <text evidence="1">Amino-acid biosynthesis; L-histidine biosynthesis; L-histidine from 5-phospho-alpha-D-ribose 1-diphosphate: step 3/9.</text>
</comment>
<comment type="subunit">
    <text evidence="1">Homodimer.</text>
</comment>
<comment type="subcellular location">
    <subcellularLocation>
        <location evidence="1">Cytoplasm</location>
    </subcellularLocation>
</comment>
<comment type="similarity">
    <text evidence="1">Belongs to the PRA-CH family.</text>
</comment>
<protein>
    <recommendedName>
        <fullName evidence="1">Phosphoribosyl-AMP cyclohydrolase</fullName>
        <shortName evidence="1">PRA-CH</shortName>
        <ecNumber evidence="1">3.5.4.19</ecNumber>
    </recommendedName>
</protein>
<feature type="chain" id="PRO_0000319713" description="Phosphoribosyl-AMP cyclohydrolase">
    <location>
        <begin position="1"/>
        <end position="148"/>
    </location>
</feature>
<feature type="binding site" evidence="1">
    <location>
        <position position="91"/>
    </location>
    <ligand>
        <name>Mg(2+)</name>
        <dbReference type="ChEBI" id="CHEBI:18420"/>
    </ligand>
</feature>
<feature type="binding site" evidence="1">
    <location>
        <position position="92"/>
    </location>
    <ligand>
        <name>Zn(2+)</name>
        <dbReference type="ChEBI" id="CHEBI:29105"/>
        <note>ligand shared between dimeric partners</note>
    </ligand>
</feature>
<feature type="binding site" evidence="1">
    <location>
        <position position="93"/>
    </location>
    <ligand>
        <name>Mg(2+)</name>
        <dbReference type="ChEBI" id="CHEBI:18420"/>
    </ligand>
</feature>
<feature type="binding site" evidence="1">
    <location>
        <position position="95"/>
    </location>
    <ligand>
        <name>Mg(2+)</name>
        <dbReference type="ChEBI" id="CHEBI:18420"/>
    </ligand>
</feature>
<feature type="binding site" evidence="1">
    <location>
        <position position="109"/>
    </location>
    <ligand>
        <name>Zn(2+)</name>
        <dbReference type="ChEBI" id="CHEBI:29105"/>
        <note>ligand shared between dimeric partners</note>
    </ligand>
</feature>
<feature type="binding site" evidence="1">
    <location>
        <position position="116"/>
    </location>
    <ligand>
        <name>Zn(2+)</name>
        <dbReference type="ChEBI" id="CHEBI:29105"/>
        <note>ligand shared between dimeric partners</note>
    </ligand>
</feature>
<evidence type="ECO:0000255" key="1">
    <source>
        <dbReference type="HAMAP-Rule" id="MF_01021"/>
    </source>
</evidence>
<proteinExistence type="inferred from homology"/>